<organism>
    <name type="scientific">Ligilactobacillus salivarius (strain UCC118)</name>
    <name type="common">Lactobacillus salivarius</name>
    <dbReference type="NCBI Taxonomy" id="362948"/>
    <lineage>
        <taxon>Bacteria</taxon>
        <taxon>Bacillati</taxon>
        <taxon>Bacillota</taxon>
        <taxon>Bacilli</taxon>
        <taxon>Lactobacillales</taxon>
        <taxon>Lactobacillaceae</taxon>
        <taxon>Ligilactobacillus</taxon>
    </lineage>
</organism>
<protein>
    <recommendedName>
        <fullName evidence="1">Xaa-Pro dipeptidyl-peptidase</fullName>
        <ecNumber evidence="1">3.4.14.11</ecNumber>
    </recommendedName>
    <alternativeName>
        <fullName evidence="1">X-Pro dipeptidyl-peptidase</fullName>
    </alternativeName>
    <alternativeName>
        <fullName evidence="1">X-prolyl-dipeptidyl aminopeptidase</fullName>
        <shortName evidence="1">X-PDAP</shortName>
    </alternativeName>
</protein>
<reference key="1">
    <citation type="journal article" date="2006" name="Proc. Natl. Acad. Sci. U.S.A.">
        <title>Multireplicon genome architecture of Lactobacillus salivarius.</title>
        <authorList>
            <person name="Claesson M.J."/>
            <person name="Li Y."/>
            <person name="Leahy S."/>
            <person name="Canchaya C."/>
            <person name="van Pijkeren J.P."/>
            <person name="Cerdeno-Tarraga A.M."/>
            <person name="Parkhill J."/>
            <person name="Flynn S."/>
            <person name="O'Sullivan G.C."/>
            <person name="Collins J.K."/>
            <person name="Higgins D."/>
            <person name="Shanahan F."/>
            <person name="Fitzgerald G.F."/>
            <person name="van Sinderen D."/>
            <person name="O'Toole P.W."/>
        </authorList>
    </citation>
    <scope>NUCLEOTIDE SEQUENCE [LARGE SCALE GENOMIC DNA]</scope>
    <source>
        <strain>UCC118</strain>
    </source>
</reference>
<accession>Q1WRZ1</accession>
<keyword id="KW-0031">Aminopeptidase</keyword>
<keyword id="KW-0963">Cytoplasm</keyword>
<keyword id="KW-0378">Hydrolase</keyword>
<keyword id="KW-0645">Protease</keyword>
<keyword id="KW-1185">Reference proteome</keyword>
<keyword id="KW-0720">Serine protease</keyword>
<sequence>MKFNQFAHVKVPFEQKLAELNRIAFLHAGDEDLASNHIYRLFLERAFPNFKTEAAKNHALSNLAATENADILTYLNSSKINARVFYAVGLQLLGFEAELDFDLKDPFSAMDKLNLPYQKEIHHRDDVINAWYDLLCTSTKKGQNLLDILANRGYFTQFYQLNLTEPIFFNGKAQPVFDTNKLIHEVVYVESELDTDQDGKRDLLKVIITRPAMTDNGMKVPTIFTASPYYLGTNDASAEKMMHSVDLPITRKEVKPLSYQDIEYHKPETKLPKKRPVVISTKNAEESWEHLFTYTFNDYMLARGFAVVYSGGVGTLDSDGYRTCGDEAETLGAKDVVEWLNGKRTAFTTKEANKAIPAWWSNGKVAMTGKSYLGTLATAAATTGVAGLETIISEAAISSWYDYYREGGLVIAPGGFPGEDADILAEECFSRQKSAGDYNHSKDGFNKFLSTITKDQDRTTGNYNTFWDARNYLKDVGNIKCDIVMVHGLNDWNVKLKNVFNLYNKLGDVEVTKKLILHQGQHIYINNFQSLDFTDMMNLWLSHKLYGVENNAKELLPDILVQNNTKESTWETYSSWQSKNFTKLYLNSDSLSAQKKENQTLEFSDHLPETTFKHYQTDIANWKEEILASTSPKLETNRLILTSKPLKHETLLKGVAKIKLKIASQLDHGLVSVKLVDYGDAKRLGATPTILERRGLDLGYHWKEDNLVEFKLAKETPFKMITQAHLNLQNRHNDFSTDELEANKFYDVEITTQPMFYHLPKGHKLGLVIYATDMEMTLQGNEENSYRIDTTGSYCLLPIEE</sequence>
<evidence type="ECO:0000255" key="1">
    <source>
        <dbReference type="HAMAP-Rule" id="MF_00698"/>
    </source>
</evidence>
<proteinExistence type="inferred from homology"/>
<name>PEPX_LIGS1</name>
<comment type="function">
    <text evidence="1">Removes N-terminal dipeptides sequentially from polypeptides having unsubstituted N-termini provided that the penultimate residue is proline.</text>
</comment>
<comment type="catalytic activity">
    <reaction evidence="1">
        <text>Hydrolyzes Xaa-Pro-|- bonds to release unblocked, N-terminal dipeptides from substrates including Ala-Pro-|-p-nitroanilide and (sequentially) Tyr-Pro-|-Phe-Pro-|-Gly-Pro-|-Ile.</text>
        <dbReference type="EC" id="3.4.14.11"/>
    </reaction>
</comment>
<comment type="subunit">
    <text evidence="1">Homodimer.</text>
</comment>
<comment type="subcellular location">
    <subcellularLocation>
        <location evidence="1">Cytoplasm</location>
    </subcellularLocation>
</comment>
<comment type="similarity">
    <text evidence="1">Belongs to the peptidase S15 family.</text>
</comment>
<feature type="chain" id="PRO_1000045484" description="Xaa-Pro dipeptidyl-peptidase">
    <location>
        <begin position="1"/>
        <end position="801"/>
    </location>
</feature>
<feature type="active site" description="Charge relay system" evidence="1">
    <location>
        <position position="371"/>
    </location>
</feature>
<feature type="active site" description="Charge relay system" evidence="1">
    <location>
        <position position="491"/>
    </location>
</feature>
<feature type="active site" description="Charge relay system" evidence="1">
    <location>
        <position position="522"/>
    </location>
</feature>
<dbReference type="EC" id="3.4.14.11" evidence="1"/>
<dbReference type="EMBL" id="CP000233">
    <property type="protein sequence ID" value="ABE00338.1"/>
    <property type="molecule type" value="Genomic_DNA"/>
</dbReference>
<dbReference type="RefSeq" id="WP_011476404.1">
    <property type="nucleotide sequence ID" value="NC_007929.1"/>
</dbReference>
<dbReference type="RefSeq" id="YP_536421.1">
    <property type="nucleotide sequence ID" value="NC_007929.1"/>
</dbReference>
<dbReference type="SMR" id="Q1WRZ1"/>
<dbReference type="STRING" id="362948.LSL_1534"/>
<dbReference type="ESTHER" id="lacs1-PEPX">
    <property type="family name" value="Lactobacillus_peptidase"/>
</dbReference>
<dbReference type="MEROPS" id="S15.001"/>
<dbReference type="KEGG" id="lsl:LSL_1534"/>
<dbReference type="PATRIC" id="fig|362948.14.peg.1625"/>
<dbReference type="HOGENOM" id="CLU_011800_0_0_9"/>
<dbReference type="OrthoDB" id="319764at2"/>
<dbReference type="Proteomes" id="UP000006559">
    <property type="component" value="Chromosome"/>
</dbReference>
<dbReference type="GO" id="GO:0005737">
    <property type="term" value="C:cytoplasm"/>
    <property type="evidence" value="ECO:0007669"/>
    <property type="project" value="UniProtKB-SubCell"/>
</dbReference>
<dbReference type="GO" id="GO:0004177">
    <property type="term" value="F:aminopeptidase activity"/>
    <property type="evidence" value="ECO:0007669"/>
    <property type="project" value="UniProtKB-KW"/>
</dbReference>
<dbReference type="GO" id="GO:0008239">
    <property type="term" value="F:dipeptidyl-peptidase activity"/>
    <property type="evidence" value="ECO:0007669"/>
    <property type="project" value="UniProtKB-UniRule"/>
</dbReference>
<dbReference type="GO" id="GO:0008236">
    <property type="term" value="F:serine-type peptidase activity"/>
    <property type="evidence" value="ECO:0007669"/>
    <property type="project" value="UniProtKB-KW"/>
</dbReference>
<dbReference type="GO" id="GO:0006508">
    <property type="term" value="P:proteolysis"/>
    <property type="evidence" value="ECO:0007669"/>
    <property type="project" value="UniProtKB-KW"/>
</dbReference>
<dbReference type="Gene3D" id="1.10.246.70">
    <property type="match status" value="1"/>
</dbReference>
<dbReference type="Gene3D" id="3.40.50.1820">
    <property type="entry name" value="alpha/beta hydrolase"/>
    <property type="match status" value="1"/>
</dbReference>
<dbReference type="Gene3D" id="2.60.120.260">
    <property type="entry name" value="Galactose-binding domain-like"/>
    <property type="match status" value="1"/>
</dbReference>
<dbReference type="HAMAP" id="MF_00698">
    <property type="entry name" value="Aminopeptidase_S15"/>
    <property type="match status" value="1"/>
</dbReference>
<dbReference type="InterPro" id="IPR029058">
    <property type="entry name" value="AB_hydrolase_fold"/>
</dbReference>
<dbReference type="InterPro" id="IPR008979">
    <property type="entry name" value="Galactose-bd-like_sf"/>
</dbReference>
<dbReference type="InterPro" id="IPR008252">
    <property type="entry name" value="Pept_S15_Xpro"/>
</dbReference>
<dbReference type="InterPro" id="IPR015251">
    <property type="entry name" value="PepX_N_dom"/>
</dbReference>
<dbReference type="InterPro" id="IPR036313">
    <property type="entry name" value="PepX_N_dom_sf"/>
</dbReference>
<dbReference type="InterPro" id="IPR000383">
    <property type="entry name" value="Xaa-Pro-like_dom"/>
</dbReference>
<dbReference type="InterPro" id="IPR013736">
    <property type="entry name" value="Xaa-Pro_dipept_C"/>
</dbReference>
<dbReference type="NCBIfam" id="NF003781">
    <property type="entry name" value="PRK05371.1-2"/>
    <property type="match status" value="1"/>
</dbReference>
<dbReference type="Pfam" id="PF02129">
    <property type="entry name" value="Peptidase_S15"/>
    <property type="match status" value="1"/>
</dbReference>
<dbReference type="Pfam" id="PF08530">
    <property type="entry name" value="PepX_C"/>
    <property type="match status" value="1"/>
</dbReference>
<dbReference type="Pfam" id="PF09168">
    <property type="entry name" value="PepX_N"/>
    <property type="match status" value="1"/>
</dbReference>
<dbReference type="PRINTS" id="PR00923">
    <property type="entry name" value="LACTOPTASE"/>
</dbReference>
<dbReference type="SMART" id="SM00939">
    <property type="entry name" value="PepX_C"/>
    <property type="match status" value="1"/>
</dbReference>
<dbReference type="SMART" id="SM00940">
    <property type="entry name" value="PepX_N"/>
    <property type="match status" value="1"/>
</dbReference>
<dbReference type="SUPFAM" id="SSF53474">
    <property type="entry name" value="alpha/beta-Hydrolases"/>
    <property type="match status" value="1"/>
</dbReference>
<dbReference type="SUPFAM" id="SSF49785">
    <property type="entry name" value="Galactose-binding domain-like"/>
    <property type="match status" value="1"/>
</dbReference>
<dbReference type="SUPFAM" id="SSF81761">
    <property type="entry name" value="X-Prolyl dipeptidyl aminopeptidase PepX, N-terminal domain"/>
    <property type="match status" value="1"/>
</dbReference>
<gene>
    <name evidence="1" type="primary">pepX</name>
    <name type="ordered locus">LSL_1534</name>
</gene>